<evidence type="ECO:0000255" key="1">
    <source>
        <dbReference type="HAMAP-Rule" id="MF_01390"/>
    </source>
</evidence>
<keyword id="KW-0150">Chloroplast</keyword>
<keyword id="KW-0507">mRNA processing</keyword>
<keyword id="KW-0934">Plastid</keyword>
<keyword id="KW-0694">RNA-binding</keyword>
<keyword id="KW-0819">tRNA processing</keyword>
<organism>
    <name type="scientific">Portulacaria afra</name>
    <name type="common">Elephant's food</name>
    <dbReference type="NCBI Taxonomy" id="86303"/>
    <lineage>
        <taxon>Eukaryota</taxon>
        <taxon>Viridiplantae</taxon>
        <taxon>Streptophyta</taxon>
        <taxon>Embryophyta</taxon>
        <taxon>Tracheophyta</taxon>
        <taxon>Spermatophyta</taxon>
        <taxon>Magnoliopsida</taxon>
        <taxon>eudicotyledons</taxon>
        <taxon>Gunneridae</taxon>
        <taxon>Pentapetalae</taxon>
        <taxon>Caryophyllales</taxon>
        <taxon>Cactineae</taxon>
        <taxon>Didiereaceae</taxon>
        <taxon>Portulacaria</taxon>
    </lineage>
</organism>
<feature type="chain" id="PRO_0000143646" description="Maturase K">
    <location>
        <begin position="1"/>
        <end position="505"/>
    </location>
</feature>
<name>MATK_PORAR</name>
<accession>Q3MKA1</accession>
<gene>
    <name evidence="1" type="primary">matK</name>
</gene>
<geneLocation type="chloroplast"/>
<comment type="function">
    <text evidence="1">Usually encoded in the trnK tRNA gene intron. Probably assists in splicing its own and other chloroplast group II introns.</text>
</comment>
<comment type="subcellular location">
    <subcellularLocation>
        <location>Plastid</location>
        <location>Chloroplast</location>
    </subcellularLocation>
</comment>
<comment type="similarity">
    <text evidence="1">Belongs to the intron maturase 2 family. MatK subfamily.</text>
</comment>
<sequence length="505" mass="60042">MEFFQRYIELDRSWQHNFFYPLIFQEYIYGFAYDHGLNKSILLENADDKKYSLLIVKRLITRMYQQNHLILAANNSNQNDFLGHKHKKNLYYQMISEGFAVIVEIPFSLLLISSLEGKEKKIVKSHNLRSIHSVFPFFEDKFLHLNYVLEILIPYPIHLEILVQTLRYWVKDASALHLLRFFLYCNSLITPSKSISIFSKRNQRLFLFLYNFHVCEYESIFVFLCNQSSHLRSTSFGDLLQRIYFYGKLEYLVKVKTFTKDFRIILWLFKDPFLHYVRYRGKSILASKGTSLLMHKWKYYLIHFWQCHFSLWSQPRRIYINRLSKHSLDFMGFFSSVRLNSSVVRSQMVENAFLIDNTIKKFDTIIRIIPLVGSLAKAKFCNVLGHPISKSVWADLLDSDIIDRFGRICRNLSHYYSGSSRKKSLYRIKYILRLSCARTLARKHKSTVRAFLKTLGSEFLEEFFTEEEKVLSLILPRDSSISRGLYRGPIWYLDIICIHDLANDD</sequence>
<protein>
    <recommendedName>
        <fullName evidence="1">Maturase K</fullName>
    </recommendedName>
    <alternativeName>
        <fullName evidence="1">Intron maturase</fullName>
    </alternativeName>
</protein>
<proteinExistence type="inferred from homology"/>
<dbReference type="EMBL" id="AY875368">
    <property type="protein sequence ID" value="AAY31011.1"/>
    <property type="molecule type" value="Genomic_DNA"/>
</dbReference>
<dbReference type="GO" id="GO:0009507">
    <property type="term" value="C:chloroplast"/>
    <property type="evidence" value="ECO:0007669"/>
    <property type="project" value="UniProtKB-SubCell"/>
</dbReference>
<dbReference type="GO" id="GO:0003723">
    <property type="term" value="F:RNA binding"/>
    <property type="evidence" value="ECO:0007669"/>
    <property type="project" value="UniProtKB-KW"/>
</dbReference>
<dbReference type="GO" id="GO:0006397">
    <property type="term" value="P:mRNA processing"/>
    <property type="evidence" value="ECO:0007669"/>
    <property type="project" value="UniProtKB-KW"/>
</dbReference>
<dbReference type="GO" id="GO:0008380">
    <property type="term" value="P:RNA splicing"/>
    <property type="evidence" value="ECO:0007669"/>
    <property type="project" value="UniProtKB-UniRule"/>
</dbReference>
<dbReference type="GO" id="GO:0008033">
    <property type="term" value="P:tRNA processing"/>
    <property type="evidence" value="ECO:0007669"/>
    <property type="project" value="UniProtKB-KW"/>
</dbReference>
<dbReference type="HAMAP" id="MF_01390">
    <property type="entry name" value="MatK"/>
    <property type="match status" value="1"/>
</dbReference>
<dbReference type="InterPro" id="IPR024937">
    <property type="entry name" value="Domain_X"/>
</dbReference>
<dbReference type="InterPro" id="IPR002866">
    <property type="entry name" value="Maturase_MatK"/>
</dbReference>
<dbReference type="InterPro" id="IPR024942">
    <property type="entry name" value="Maturase_MatK_N"/>
</dbReference>
<dbReference type="PANTHER" id="PTHR34811">
    <property type="entry name" value="MATURASE K"/>
    <property type="match status" value="1"/>
</dbReference>
<dbReference type="PANTHER" id="PTHR34811:SF1">
    <property type="entry name" value="MATURASE K"/>
    <property type="match status" value="1"/>
</dbReference>
<dbReference type="Pfam" id="PF01348">
    <property type="entry name" value="Intron_maturas2"/>
    <property type="match status" value="1"/>
</dbReference>
<dbReference type="Pfam" id="PF01824">
    <property type="entry name" value="MatK_N"/>
    <property type="match status" value="1"/>
</dbReference>
<reference key="1">
    <citation type="journal article" date="2005" name="Am. J. Bot.">
        <title>Basal cactus phylogeny: implications of Pereskia (Cactaceae) paraphyly for the transition to the cactus life form.</title>
        <authorList>
            <person name="Edwards E.J."/>
            <person name="Nyffeler R."/>
            <person name="Donoghue M.J."/>
        </authorList>
        <dbReference type="AGRICOLA" id="IND43724792"/>
    </citation>
    <scope>NUCLEOTIDE SEQUENCE [GENOMIC DNA]</scope>
</reference>